<proteinExistence type="inferred from homology"/>
<comment type="function">
    <text evidence="1">Catalyzes the isomerization between 2-isopropylmalate and 3-isopropylmalate, via the formation of 2-isopropylmaleate.</text>
</comment>
<comment type="catalytic activity">
    <reaction evidence="1">
        <text>(2R,3S)-3-isopropylmalate = (2S)-2-isopropylmalate</text>
        <dbReference type="Rhea" id="RHEA:32287"/>
        <dbReference type="ChEBI" id="CHEBI:1178"/>
        <dbReference type="ChEBI" id="CHEBI:35121"/>
        <dbReference type="EC" id="4.2.1.33"/>
    </reaction>
</comment>
<comment type="pathway">
    <text evidence="1">Amino-acid biosynthesis; L-leucine biosynthesis; L-leucine from 3-methyl-2-oxobutanoate: step 2/4.</text>
</comment>
<comment type="subunit">
    <text evidence="1">Heterodimer of LeuC and LeuD.</text>
</comment>
<comment type="similarity">
    <text evidence="1">Belongs to the LeuD family. LeuD type 1 subfamily.</text>
</comment>
<keyword id="KW-0028">Amino-acid biosynthesis</keyword>
<keyword id="KW-0100">Branched-chain amino acid biosynthesis</keyword>
<keyword id="KW-0432">Leucine biosynthesis</keyword>
<keyword id="KW-0456">Lyase</keyword>
<keyword id="KW-1185">Reference proteome</keyword>
<organism>
    <name type="scientific">Leuconostoc mesenteroides subsp. mesenteroides (strain ATCC 8293 / DSM 20343 / BCRC 11652 / CCM 1803 / JCM 6124 / NCDO 523 / NBRC 100496 / NCIMB 8023 / NCTC 12954 / NRRL B-1118 / 37Y)</name>
    <dbReference type="NCBI Taxonomy" id="203120"/>
    <lineage>
        <taxon>Bacteria</taxon>
        <taxon>Bacillati</taxon>
        <taxon>Bacillota</taxon>
        <taxon>Bacilli</taxon>
        <taxon>Lactobacillales</taxon>
        <taxon>Lactobacillaceae</taxon>
        <taxon>Leuconostoc</taxon>
    </lineage>
</organism>
<evidence type="ECO:0000255" key="1">
    <source>
        <dbReference type="HAMAP-Rule" id="MF_01031"/>
    </source>
</evidence>
<gene>
    <name evidence="1" type="primary">leuD</name>
    <name type="ordered locus">LEUM_2029</name>
</gene>
<dbReference type="EC" id="4.2.1.33" evidence="1"/>
<dbReference type="EMBL" id="CP000414">
    <property type="protein sequence ID" value="ABJ63099.1"/>
    <property type="molecule type" value="Genomic_DNA"/>
</dbReference>
<dbReference type="RefSeq" id="WP_010290567.1">
    <property type="nucleotide sequence ID" value="NC_008531.1"/>
</dbReference>
<dbReference type="SMR" id="Q03UM3"/>
<dbReference type="EnsemblBacteria" id="ABJ63099">
    <property type="protein sequence ID" value="ABJ63099"/>
    <property type="gene ID" value="LEUM_2029"/>
</dbReference>
<dbReference type="GeneID" id="29577582"/>
<dbReference type="KEGG" id="lme:LEUM_2029"/>
<dbReference type="eggNOG" id="COG0066">
    <property type="taxonomic scope" value="Bacteria"/>
</dbReference>
<dbReference type="HOGENOM" id="CLU_081378_0_3_9"/>
<dbReference type="UniPathway" id="UPA00048">
    <property type="reaction ID" value="UER00071"/>
</dbReference>
<dbReference type="Proteomes" id="UP000000362">
    <property type="component" value="Chromosome"/>
</dbReference>
<dbReference type="GO" id="GO:0009316">
    <property type="term" value="C:3-isopropylmalate dehydratase complex"/>
    <property type="evidence" value="ECO:0007669"/>
    <property type="project" value="InterPro"/>
</dbReference>
<dbReference type="GO" id="GO:0003861">
    <property type="term" value="F:3-isopropylmalate dehydratase activity"/>
    <property type="evidence" value="ECO:0007669"/>
    <property type="project" value="UniProtKB-UniRule"/>
</dbReference>
<dbReference type="GO" id="GO:0009098">
    <property type="term" value="P:L-leucine biosynthetic process"/>
    <property type="evidence" value="ECO:0007669"/>
    <property type="project" value="UniProtKB-UniRule"/>
</dbReference>
<dbReference type="CDD" id="cd01577">
    <property type="entry name" value="IPMI_Swivel"/>
    <property type="match status" value="1"/>
</dbReference>
<dbReference type="FunFam" id="3.20.19.10:FF:000003">
    <property type="entry name" value="3-isopropylmalate dehydratase small subunit"/>
    <property type="match status" value="1"/>
</dbReference>
<dbReference type="Gene3D" id="3.20.19.10">
    <property type="entry name" value="Aconitase, domain 4"/>
    <property type="match status" value="1"/>
</dbReference>
<dbReference type="HAMAP" id="MF_01031">
    <property type="entry name" value="LeuD_type1"/>
    <property type="match status" value="1"/>
</dbReference>
<dbReference type="InterPro" id="IPR004431">
    <property type="entry name" value="3-IsopropMal_deHydase_ssu"/>
</dbReference>
<dbReference type="InterPro" id="IPR015928">
    <property type="entry name" value="Aconitase/3IPM_dehydase_swvl"/>
</dbReference>
<dbReference type="InterPro" id="IPR000573">
    <property type="entry name" value="AconitaseA/IPMdHydase_ssu_swvl"/>
</dbReference>
<dbReference type="InterPro" id="IPR033940">
    <property type="entry name" value="IPMI_Swivel"/>
</dbReference>
<dbReference type="InterPro" id="IPR050075">
    <property type="entry name" value="LeuD"/>
</dbReference>
<dbReference type="NCBIfam" id="TIGR00171">
    <property type="entry name" value="leuD"/>
    <property type="match status" value="1"/>
</dbReference>
<dbReference type="NCBIfam" id="NF002458">
    <property type="entry name" value="PRK01641.1"/>
    <property type="match status" value="1"/>
</dbReference>
<dbReference type="PANTHER" id="PTHR43345:SF5">
    <property type="entry name" value="3-ISOPROPYLMALATE DEHYDRATASE SMALL SUBUNIT"/>
    <property type="match status" value="1"/>
</dbReference>
<dbReference type="PANTHER" id="PTHR43345">
    <property type="entry name" value="3-ISOPROPYLMALATE DEHYDRATASE SMALL SUBUNIT 2-RELATED-RELATED"/>
    <property type="match status" value="1"/>
</dbReference>
<dbReference type="Pfam" id="PF00694">
    <property type="entry name" value="Aconitase_C"/>
    <property type="match status" value="1"/>
</dbReference>
<dbReference type="SUPFAM" id="SSF52016">
    <property type="entry name" value="LeuD/IlvD-like"/>
    <property type="match status" value="1"/>
</dbReference>
<reference key="1">
    <citation type="journal article" date="2006" name="Proc. Natl. Acad. Sci. U.S.A.">
        <title>Comparative genomics of the lactic acid bacteria.</title>
        <authorList>
            <person name="Makarova K.S."/>
            <person name="Slesarev A."/>
            <person name="Wolf Y.I."/>
            <person name="Sorokin A."/>
            <person name="Mirkin B."/>
            <person name="Koonin E.V."/>
            <person name="Pavlov A."/>
            <person name="Pavlova N."/>
            <person name="Karamychev V."/>
            <person name="Polouchine N."/>
            <person name="Shakhova V."/>
            <person name="Grigoriev I."/>
            <person name="Lou Y."/>
            <person name="Rohksar D."/>
            <person name="Lucas S."/>
            <person name="Huang K."/>
            <person name="Goodstein D.M."/>
            <person name="Hawkins T."/>
            <person name="Plengvidhya V."/>
            <person name="Welker D."/>
            <person name="Hughes J."/>
            <person name="Goh Y."/>
            <person name="Benson A."/>
            <person name="Baldwin K."/>
            <person name="Lee J.-H."/>
            <person name="Diaz-Muniz I."/>
            <person name="Dosti B."/>
            <person name="Smeianov V."/>
            <person name="Wechter W."/>
            <person name="Barabote R."/>
            <person name="Lorca G."/>
            <person name="Altermann E."/>
            <person name="Barrangou R."/>
            <person name="Ganesan B."/>
            <person name="Xie Y."/>
            <person name="Rawsthorne H."/>
            <person name="Tamir D."/>
            <person name="Parker C."/>
            <person name="Breidt F."/>
            <person name="Broadbent J.R."/>
            <person name="Hutkins R."/>
            <person name="O'Sullivan D."/>
            <person name="Steele J."/>
            <person name="Unlu G."/>
            <person name="Saier M.H. Jr."/>
            <person name="Klaenhammer T."/>
            <person name="Richardson P."/>
            <person name="Kozyavkin S."/>
            <person name="Weimer B.C."/>
            <person name="Mills D.A."/>
        </authorList>
    </citation>
    <scope>NUCLEOTIDE SEQUENCE [LARGE SCALE GENOMIC DNA]</scope>
    <source>
        <strain>ATCC 8293 / DSM 20343 / BCRC 11652 / CCM 1803 / JCM 6124 / NCDO 523 / NBRC 100496 / NCIMB 8023 / NCTC 12954 / NRRL B-1118 / 37Y</strain>
    </source>
</reference>
<feature type="chain" id="PRO_1000063780" description="3-isopropylmalate dehydratase small subunit">
    <location>
        <begin position="1"/>
        <end position="194"/>
    </location>
</feature>
<sequence length="194" mass="22079">MEAFVRETGRAVVIPNDNINTDIILPKQFLKNILKTGFGKDLFFDWRYNADGSLNEAFELNKPAHQGASILITGNDFGSGSSREHAVWALTDYGFRAVIGGGFSDIFYMNSTKNGLLPIVLPEENRKILRGIQADENIQIDLPEQTVTYKNYTFHFDINSQWKEKFINGEDDIDNTMKYEKLIAAFEKQRPNFG</sequence>
<protein>
    <recommendedName>
        <fullName evidence="1">3-isopropylmalate dehydratase small subunit</fullName>
        <ecNumber evidence="1">4.2.1.33</ecNumber>
    </recommendedName>
    <alternativeName>
        <fullName evidence="1">Alpha-IPM isomerase</fullName>
        <shortName evidence="1">IPMI</shortName>
    </alternativeName>
    <alternativeName>
        <fullName evidence="1">Isopropylmalate isomerase</fullName>
    </alternativeName>
</protein>
<name>LEUD_LEUMM</name>
<accession>Q03UM3</accession>